<reference key="1">
    <citation type="journal article" date="1996" name="Microbiology">
        <title>Transcription of the glnB and glnA genes in the photosynthetic bacterium Rhodospirillum rubrum.</title>
        <authorList>
            <person name="Johansson M."/>
            <person name="Nordlund S."/>
        </authorList>
    </citation>
    <scope>NUCLEOTIDE SEQUENCE [GENOMIC DNA]</scope>
</reference>
<reference key="2">
    <citation type="submission" date="1997-10" db="EMBL/GenBank/DDBJ databases">
        <authorList>
            <person name="Zhang Y."/>
            <person name="Ludden P.W."/>
            <person name="Roberts G.P."/>
        </authorList>
    </citation>
    <scope>NUCLEOTIDE SEQUENCE [GENOMIC DNA]</scope>
</reference>
<reference key="3">
    <citation type="journal article" date="2011" name="Stand. Genomic Sci.">
        <title>Complete genome sequence of Rhodospirillum rubrum type strain (S1).</title>
        <authorList>
            <person name="Munk A.C."/>
            <person name="Copeland A."/>
            <person name="Lucas S."/>
            <person name="Lapidus A."/>
            <person name="Del Rio T.G."/>
            <person name="Barry K."/>
            <person name="Detter J.C."/>
            <person name="Hammon N."/>
            <person name="Israni S."/>
            <person name="Pitluck S."/>
            <person name="Brettin T."/>
            <person name="Bruce D."/>
            <person name="Han C."/>
            <person name="Tapia R."/>
            <person name="Gilna P."/>
            <person name="Schmutz J."/>
            <person name="Larimer F."/>
            <person name="Land M."/>
            <person name="Kyrpides N.C."/>
            <person name="Mavromatis K."/>
            <person name="Richardson P."/>
            <person name="Rohde M."/>
            <person name="Goeker M."/>
            <person name="Klenk H.P."/>
            <person name="Zhang Y."/>
            <person name="Roberts G.P."/>
            <person name="Reslewic S."/>
            <person name="Schwartz D.C."/>
        </authorList>
    </citation>
    <scope>NUCLEOTIDE SEQUENCE [LARGE SCALE GENOMIC DNA]</scope>
    <source>
        <strain>ATCC 11170 / ATH 1.1.1 / DSM 467 / LMG 4362 / NCIMB 8255 / S1</strain>
    </source>
</reference>
<dbReference type="EMBL" id="X84158">
    <property type="protein sequence ID" value="CAA58963.1"/>
    <property type="molecule type" value="Genomic_DNA"/>
</dbReference>
<dbReference type="EMBL" id="AF029703">
    <property type="protein sequence ID" value="AAB84167.1"/>
    <property type="molecule type" value="Genomic_DNA"/>
</dbReference>
<dbReference type="EMBL" id="CP000230">
    <property type="protein sequence ID" value="ABC22885.1"/>
    <property type="molecule type" value="Genomic_DNA"/>
</dbReference>
<dbReference type="PIR" id="S52328">
    <property type="entry name" value="S52328"/>
</dbReference>
<dbReference type="RefSeq" id="WP_011389838.1">
    <property type="nucleotide sequence ID" value="NC_007643.1"/>
</dbReference>
<dbReference type="RefSeq" id="YP_427172.1">
    <property type="nucleotide sequence ID" value="NC_007643.1"/>
</dbReference>
<dbReference type="SMR" id="Q53044"/>
<dbReference type="STRING" id="269796.Rru_A2085"/>
<dbReference type="EnsemblBacteria" id="ABC22885">
    <property type="protein sequence ID" value="ABC22885"/>
    <property type="gene ID" value="Rru_A2085"/>
</dbReference>
<dbReference type="KEGG" id="rru:Rru_A2085"/>
<dbReference type="PATRIC" id="fig|269796.9.peg.2175"/>
<dbReference type="eggNOG" id="COG0347">
    <property type="taxonomic scope" value="Bacteria"/>
</dbReference>
<dbReference type="HOGENOM" id="CLU_082268_0_0_5"/>
<dbReference type="PhylomeDB" id="Q53044"/>
<dbReference type="Proteomes" id="UP000001929">
    <property type="component" value="Chromosome"/>
</dbReference>
<dbReference type="GO" id="GO:0005829">
    <property type="term" value="C:cytosol"/>
    <property type="evidence" value="ECO:0007669"/>
    <property type="project" value="TreeGrafter"/>
</dbReference>
<dbReference type="GO" id="GO:0005524">
    <property type="term" value="F:ATP binding"/>
    <property type="evidence" value="ECO:0007669"/>
    <property type="project" value="TreeGrafter"/>
</dbReference>
<dbReference type="GO" id="GO:0030234">
    <property type="term" value="F:enzyme regulator activity"/>
    <property type="evidence" value="ECO:0000314"/>
    <property type="project" value="CACAO"/>
</dbReference>
<dbReference type="GO" id="GO:0009399">
    <property type="term" value="P:nitrogen fixation"/>
    <property type="evidence" value="ECO:0007669"/>
    <property type="project" value="UniProtKB-KW"/>
</dbReference>
<dbReference type="GO" id="GO:0006808">
    <property type="term" value="P:regulation of nitrogen utilization"/>
    <property type="evidence" value="ECO:0000315"/>
    <property type="project" value="CACAO"/>
</dbReference>
<dbReference type="FunFam" id="3.30.70.120:FF:000001">
    <property type="entry name" value="Nitrogen regulatory protein P-II"/>
    <property type="match status" value="1"/>
</dbReference>
<dbReference type="Gene3D" id="3.30.70.120">
    <property type="match status" value="1"/>
</dbReference>
<dbReference type="InterPro" id="IPR002187">
    <property type="entry name" value="N-reg_PII"/>
</dbReference>
<dbReference type="InterPro" id="IPR011322">
    <property type="entry name" value="N-reg_PII-like_a/b"/>
</dbReference>
<dbReference type="InterPro" id="IPR015867">
    <property type="entry name" value="N-reg_PII/ATP_PRibTrfase_C"/>
</dbReference>
<dbReference type="InterPro" id="IPR017918">
    <property type="entry name" value="N-reg_PII_CS"/>
</dbReference>
<dbReference type="InterPro" id="IPR002332">
    <property type="entry name" value="N-reg_PII_urydylation_site"/>
</dbReference>
<dbReference type="PANTHER" id="PTHR30115">
    <property type="entry name" value="NITROGEN REGULATORY PROTEIN P-II"/>
    <property type="match status" value="1"/>
</dbReference>
<dbReference type="PANTHER" id="PTHR30115:SF11">
    <property type="entry name" value="NITROGEN REGULATORY PROTEIN P-II HOMOLOG"/>
    <property type="match status" value="1"/>
</dbReference>
<dbReference type="Pfam" id="PF00543">
    <property type="entry name" value="P-II"/>
    <property type="match status" value="1"/>
</dbReference>
<dbReference type="PIRSF" id="PIRSF039144">
    <property type="entry name" value="GlnB"/>
    <property type="match status" value="1"/>
</dbReference>
<dbReference type="PRINTS" id="PR00340">
    <property type="entry name" value="PIIGLNB"/>
</dbReference>
<dbReference type="SMART" id="SM00938">
    <property type="entry name" value="P-II"/>
    <property type="match status" value="1"/>
</dbReference>
<dbReference type="SUPFAM" id="SSF54913">
    <property type="entry name" value="GlnB-like"/>
    <property type="match status" value="1"/>
</dbReference>
<dbReference type="PROSITE" id="PS00638">
    <property type="entry name" value="PII_GLNB_CTER"/>
    <property type="match status" value="1"/>
</dbReference>
<dbReference type="PROSITE" id="PS51343">
    <property type="entry name" value="PII_GLNB_DOM"/>
    <property type="match status" value="1"/>
</dbReference>
<dbReference type="PROSITE" id="PS00496">
    <property type="entry name" value="PII_GLNB_UMP"/>
    <property type="match status" value="1"/>
</dbReference>
<comment type="function">
    <text>P-II indirectly controls the transcription of the glutamine synthetase gene (glnA). P-II prevents NR-II-catalyzed conversion of NR-I to NR-I-phosphate, the transcriptional activator of glnA. When P-II is uridylylated to P-II-UMP, these events are reversed. When the ratio of Gln to 2-ketoglutarate decreases, P-II is uridylylated to P-II-UMP, which causes the deadenylation of glutamine synthetase, so activating the enzyme.</text>
</comment>
<comment type="subunit">
    <text evidence="1">Homotrimer.</text>
</comment>
<comment type="similarity">
    <text evidence="2">Belongs to the P(II) protein family.</text>
</comment>
<gene>
    <name type="primary">glnB</name>
    <name type="ordered locus">Rru_A2085</name>
</gene>
<keyword id="KW-0535">Nitrogen fixation</keyword>
<keyword id="KW-0547">Nucleotide-binding</keyword>
<keyword id="KW-0597">Phosphoprotein</keyword>
<keyword id="KW-1185">Reference proteome</keyword>
<keyword id="KW-0804">Transcription</keyword>
<keyword id="KW-0805">Transcription regulation</keyword>
<proteinExistence type="inferred from homology"/>
<sequence length="112" mass="12420">MKKIEAIIKPFKLDEVKEALHEIGLQGITVTEAKGFGRQKGHTELYRGAEYVVDFLPKVKIELVIEDALVERAIEAIQQAAQTGRIGDGKIFVYAIEEAIRIRTGERGGDAI</sequence>
<feature type="chain" id="PRO_0000139787" description="Nitrogen regulatory protein P-II">
    <location>
        <begin position="1"/>
        <end position="112"/>
    </location>
</feature>
<feature type="modified residue" description="O-UMP-tyrosine" evidence="2">
    <location>
        <position position="51"/>
    </location>
</feature>
<evidence type="ECO:0000250" key="1"/>
<evidence type="ECO:0000255" key="2">
    <source>
        <dbReference type="PROSITE-ProRule" id="PRU00675"/>
    </source>
</evidence>
<protein>
    <recommendedName>
        <fullName>Nitrogen regulatory protein P-II</fullName>
    </recommendedName>
</protein>
<name>GLNB_RHORT</name>
<organism>
    <name type="scientific">Rhodospirillum rubrum (strain ATCC 11170 / ATH 1.1.1 / DSM 467 / LMG 4362 / NCIMB 8255 / S1)</name>
    <dbReference type="NCBI Taxonomy" id="269796"/>
    <lineage>
        <taxon>Bacteria</taxon>
        <taxon>Pseudomonadati</taxon>
        <taxon>Pseudomonadota</taxon>
        <taxon>Alphaproteobacteria</taxon>
        <taxon>Rhodospirillales</taxon>
        <taxon>Rhodospirillaceae</taxon>
        <taxon>Rhodospirillum</taxon>
    </lineage>
</organism>
<accession>Q53044</accession>
<accession>Q2RSL0</accession>